<proteinExistence type="inferred from homology"/>
<feature type="chain" id="PRO_0000162050" description="Uncharacterized RNA methyltransferase TDE_2619">
    <location>
        <begin position="1"/>
        <end position="404"/>
    </location>
</feature>
<feature type="active site" description="Nucleophile" evidence="2">
    <location>
        <position position="361"/>
    </location>
</feature>
<feature type="binding site" evidence="1">
    <location>
        <position position="69"/>
    </location>
    <ligand>
        <name>[4Fe-4S] cluster</name>
        <dbReference type="ChEBI" id="CHEBI:49883"/>
    </ligand>
</feature>
<feature type="binding site" evidence="1">
    <location>
        <position position="75"/>
    </location>
    <ligand>
        <name>[4Fe-4S] cluster</name>
        <dbReference type="ChEBI" id="CHEBI:49883"/>
    </ligand>
</feature>
<feature type="binding site" evidence="1">
    <location>
        <position position="78"/>
    </location>
    <ligand>
        <name>[4Fe-4S] cluster</name>
        <dbReference type="ChEBI" id="CHEBI:49883"/>
    </ligand>
</feature>
<feature type="binding site" evidence="1">
    <location>
        <position position="166"/>
    </location>
    <ligand>
        <name>[4Fe-4S] cluster</name>
        <dbReference type="ChEBI" id="CHEBI:49883"/>
    </ligand>
</feature>
<feature type="binding site" evidence="2">
    <location>
        <position position="226"/>
    </location>
    <ligand>
        <name>S-adenosyl-L-methionine</name>
        <dbReference type="ChEBI" id="CHEBI:59789"/>
    </ligand>
</feature>
<feature type="binding site" evidence="2">
    <location>
        <position position="253"/>
    </location>
    <ligand>
        <name>S-adenosyl-L-methionine</name>
        <dbReference type="ChEBI" id="CHEBI:59789"/>
    </ligand>
</feature>
<feature type="binding site" evidence="2">
    <location>
        <position position="274"/>
    </location>
    <ligand>
        <name>S-adenosyl-L-methionine</name>
        <dbReference type="ChEBI" id="CHEBI:59789"/>
    </ligand>
</feature>
<feature type="binding site" evidence="2">
    <location>
        <position position="334"/>
    </location>
    <ligand>
        <name>S-adenosyl-L-methionine</name>
        <dbReference type="ChEBI" id="CHEBI:59789"/>
    </ligand>
</feature>
<evidence type="ECO:0000250" key="1"/>
<evidence type="ECO:0000255" key="2">
    <source>
        <dbReference type="PROSITE-ProRule" id="PRU01024"/>
    </source>
</evidence>
<sequence length="404" mass="46211">MQKEIVKTKKMVFGASCIASLKDGKTVFVPYSLPDEVLEISIVKEHKNYTEGKIEKILEVSPHRVEPRCPHFYVCGGCNLQTADDEYQHFLRKSMALEALDRALSLNKEKAVFEKQALEKSFFEKSIFVSGPDWDYRARFQFYIDKDGSLSLKENKSSGSVKIKDCPIAVPAIRNLLKSNLKEYTPNSRIHIFSDGEKIFTQDNAKDCEVRLAGKRIKFNPLGFFQSNLEMTEKLINTIFEYAEISSSVLDFYSGVGTFSLFAYDQAKEIHLVEHNKHALAYAQENFLINSSSSGIVREKKENGFPKIFYHALDGKNWAKTKESKLKFDTVFVDPPRIGIDKEALSWLCSSGTRQIFYISCDPVTFARDTASLLVSGYKLEKHFLFDFYPQTHHIETLGIFRKN</sequence>
<organism>
    <name type="scientific">Treponema denticola (strain ATCC 35405 / DSM 14222 / CIP 103919 / JCM 8153 / KCTC 15104)</name>
    <dbReference type="NCBI Taxonomy" id="243275"/>
    <lineage>
        <taxon>Bacteria</taxon>
        <taxon>Pseudomonadati</taxon>
        <taxon>Spirochaetota</taxon>
        <taxon>Spirochaetia</taxon>
        <taxon>Spirochaetales</taxon>
        <taxon>Treponemataceae</taxon>
        <taxon>Treponema</taxon>
    </lineage>
</organism>
<dbReference type="EC" id="2.1.1.-"/>
<dbReference type="EMBL" id="AE017226">
    <property type="protein sequence ID" value="AAS13136.1"/>
    <property type="molecule type" value="Genomic_DNA"/>
</dbReference>
<dbReference type="RefSeq" id="NP_973217.1">
    <property type="nucleotide sequence ID" value="NC_002967.9"/>
</dbReference>
<dbReference type="RefSeq" id="WP_002680626.1">
    <property type="nucleotide sequence ID" value="NC_002967.9"/>
</dbReference>
<dbReference type="SMR" id="Q73JF6"/>
<dbReference type="STRING" id="243275.TDE_2619"/>
<dbReference type="PaxDb" id="243275-TDE_2619"/>
<dbReference type="GeneID" id="2740793"/>
<dbReference type="KEGG" id="tde:TDE_2619"/>
<dbReference type="PATRIC" id="fig|243275.7.peg.2476"/>
<dbReference type="eggNOG" id="COG2265">
    <property type="taxonomic scope" value="Bacteria"/>
</dbReference>
<dbReference type="HOGENOM" id="CLU_014689_8_2_12"/>
<dbReference type="OrthoDB" id="9804590at2"/>
<dbReference type="Proteomes" id="UP000008212">
    <property type="component" value="Chromosome"/>
</dbReference>
<dbReference type="GO" id="GO:0051539">
    <property type="term" value="F:4 iron, 4 sulfur cluster binding"/>
    <property type="evidence" value="ECO:0007669"/>
    <property type="project" value="UniProtKB-KW"/>
</dbReference>
<dbReference type="GO" id="GO:0046872">
    <property type="term" value="F:metal ion binding"/>
    <property type="evidence" value="ECO:0007669"/>
    <property type="project" value="UniProtKB-KW"/>
</dbReference>
<dbReference type="GO" id="GO:0070041">
    <property type="term" value="F:rRNA (uridine-C5-)-methyltransferase activity"/>
    <property type="evidence" value="ECO:0007669"/>
    <property type="project" value="TreeGrafter"/>
</dbReference>
<dbReference type="GO" id="GO:0070475">
    <property type="term" value="P:rRNA base methylation"/>
    <property type="evidence" value="ECO:0007669"/>
    <property type="project" value="TreeGrafter"/>
</dbReference>
<dbReference type="Gene3D" id="2.40.50.140">
    <property type="entry name" value="Nucleic acid-binding proteins"/>
    <property type="match status" value="1"/>
</dbReference>
<dbReference type="Gene3D" id="3.40.50.150">
    <property type="entry name" value="Vaccinia Virus protein VP39"/>
    <property type="match status" value="1"/>
</dbReference>
<dbReference type="InterPro" id="IPR030390">
    <property type="entry name" value="MeTrfase_TrmA_AS"/>
</dbReference>
<dbReference type="InterPro" id="IPR012340">
    <property type="entry name" value="NA-bd_OB-fold"/>
</dbReference>
<dbReference type="InterPro" id="IPR029063">
    <property type="entry name" value="SAM-dependent_MTases_sf"/>
</dbReference>
<dbReference type="InterPro" id="IPR010280">
    <property type="entry name" value="U5_MeTrfase_fam"/>
</dbReference>
<dbReference type="PANTHER" id="PTHR11061">
    <property type="entry name" value="RNA M5U METHYLTRANSFERASE"/>
    <property type="match status" value="1"/>
</dbReference>
<dbReference type="PANTHER" id="PTHR11061:SF30">
    <property type="entry name" value="TRNA (URACIL(54)-C(5))-METHYLTRANSFERASE"/>
    <property type="match status" value="1"/>
</dbReference>
<dbReference type="Pfam" id="PF05958">
    <property type="entry name" value="tRNA_U5-meth_tr"/>
    <property type="match status" value="1"/>
</dbReference>
<dbReference type="SUPFAM" id="SSF50249">
    <property type="entry name" value="Nucleic acid-binding proteins"/>
    <property type="match status" value="1"/>
</dbReference>
<dbReference type="SUPFAM" id="SSF53335">
    <property type="entry name" value="S-adenosyl-L-methionine-dependent methyltransferases"/>
    <property type="match status" value="1"/>
</dbReference>
<dbReference type="PROSITE" id="PS51687">
    <property type="entry name" value="SAM_MT_RNA_M5U"/>
    <property type="match status" value="1"/>
</dbReference>
<dbReference type="PROSITE" id="PS01230">
    <property type="entry name" value="TRMA_1"/>
    <property type="match status" value="1"/>
</dbReference>
<keyword id="KW-0004">4Fe-4S</keyword>
<keyword id="KW-0408">Iron</keyword>
<keyword id="KW-0411">Iron-sulfur</keyword>
<keyword id="KW-0479">Metal-binding</keyword>
<keyword id="KW-0489">Methyltransferase</keyword>
<keyword id="KW-1185">Reference proteome</keyword>
<keyword id="KW-0949">S-adenosyl-L-methionine</keyword>
<keyword id="KW-0808">Transferase</keyword>
<name>Y2619_TREDE</name>
<accession>Q73JF6</accession>
<reference key="1">
    <citation type="journal article" date="2004" name="Proc. Natl. Acad. Sci. U.S.A.">
        <title>Comparison of the genome of the oral pathogen Treponema denticola with other spirochete genomes.</title>
        <authorList>
            <person name="Seshadri R."/>
            <person name="Myers G.S.A."/>
            <person name="Tettelin H."/>
            <person name="Eisen J.A."/>
            <person name="Heidelberg J.F."/>
            <person name="Dodson R.J."/>
            <person name="Davidsen T.M."/>
            <person name="DeBoy R.T."/>
            <person name="Fouts D.E."/>
            <person name="Haft D.H."/>
            <person name="Selengut J."/>
            <person name="Ren Q."/>
            <person name="Brinkac L.M."/>
            <person name="Madupu R."/>
            <person name="Kolonay J.F."/>
            <person name="Durkin S.A."/>
            <person name="Daugherty S.C."/>
            <person name="Shetty J."/>
            <person name="Shvartsbeyn A."/>
            <person name="Gebregeorgis E."/>
            <person name="Geer K."/>
            <person name="Tsegaye G."/>
            <person name="Malek J.A."/>
            <person name="Ayodeji B."/>
            <person name="Shatsman S."/>
            <person name="McLeod M.P."/>
            <person name="Smajs D."/>
            <person name="Howell J.K."/>
            <person name="Pal S."/>
            <person name="Amin A."/>
            <person name="Vashisth P."/>
            <person name="McNeill T.Z."/>
            <person name="Xiang Q."/>
            <person name="Sodergren E."/>
            <person name="Baca E."/>
            <person name="Weinstock G.M."/>
            <person name="Norris S.J."/>
            <person name="Fraser C.M."/>
            <person name="Paulsen I.T."/>
        </authorList>
    </citation>
    <scope>NUCLEOTIDE SEQUENCE [LARGE SCALE GENOMIC DNA]</scope>
    <source>
        <strain>ATCC 35405 / DSM 14222 / CIP 103919 / JCM 8153 / KCTC 15104</strain>
    </source>
</reference>
<gene>
    <name type="ordered locus">TDE_2619</name>
</gene>
<protein>
    <recommendedName>
        <fullName>Uncharacterized RNA methyltransferase TDE_2619</fullName>
        <ecNumber>2.1.1.-</ecNumber>
    </recommendedName>
</protein>
<comment type="similarity">
    <text evidence="2">Belongs to the class I-like SAM-binding methyltransferase superfamily. RNA M5U methyltransferase family.</text>
</comment>